<protein>
    <recommendedName>
        <fullName evidence="4">Olfactory receptor 8U3</fullName>
    </recommendedName>
    <alternativeName>
        <fullName>Olfactory receptor 5R1</fullName>
    </alternativeName>
    <alternativeName>
        <fullName>Olfactory receptor OR11-185</fullName>
    </alternativeName>
</protein>
<comment type="function">
    <text evidence="3">Odorant receptor.</text>
</comment>
<comment type="subcellular location">
    <subcellularLocation>
        <location>Cell membrane</location>
        <topology>Multi-pass membrane protein</topology>
    </subcellularLocation>
</comment>
<comment type="similarity">
    <text evidence="2">Belongs to the G-protein coupled receptor 1 family.</text>
</comment>
<comment type="online information" name="Human Olfactory Receptor Data Exploratorium (HORDE)">
    <link uri="http://genome.weizmann.ac.il/horde/card/index/symbol:OR5R1"/>
</comment>
<reference key="1">
    <citation type="submission" date="2001-07" db="EMBL/GenBank/DDBJ databases">
        <title>Genome-wide discovery and analysis of human seven transmembrane helix receptor genes.</title>
        <authorList>
            <person name="Suwa M."/>
            <person name="Sato T."/>
            <person name="Okouchi I."/>
            <person name="Arita M."/>
            <person name="Futami K."/>
            <person name="Matsumoto S."/>
            <person name="Tsutsumi S."/>
            <person name="Aburatani H."/>
            <person name="Asai K."/>
            <person name="Akiyama Y."/>
        </authorList>
    </citation>
    <scope>NUCLEOTIDE SEQUENCE [GENOMIC DNA]</scope>
</reference>
<reference key="2">
    <citation type="journal article" date="2004" name="Proc. Natl. Acad. Sci. U.S.A.">
        <title>The human olfactory receptor gene family.</title>
        <authorList>
            <person name="Malnic B."/>
            <person name="Godfrey P.A."/>
            <person name="Buck L.B."/>
        </authorList>
    </citation>
    <scope>IDENTIFICATION</scope>
</reference>
<reference key="3">
    <citation type="journal article" date="2004" name="Proc. Natl. Acad. Sci. U.S.A.">
        <authorList>
            <person name="Malnic B."/>
            <person name="Godfrey P.A."/>
            <person name="Buck L.B."/>
        </authorList>
    </citation>
    <scope>ERRATUM OF PUBMED:14983052</scope>
</reference>
<accession>Q8NH85</accession>
<gene>
    <name evidence="4" type="primary">OR8U3</name>
    <name type="synonym">OR5R1</name>
    <name type="synonym">OR5R1P</name>
</gene>
<dbReference type="EMBL" id="AB065504">
    <property type="protein sequence ID" value="BAC05752.1"/>
    <property type="molecule type" value="Genomic_DNA"/>
</dbReference>
<dbReference type="EMBL" id="BK004514">
    <property type="protein sequence ID" value="DAA04912.1"/>
    <property type="molecule type" value="Genomic_DNA"/>
</dbReference>
<dbReference type="RefSeq" id="NP_001004744.1">
    <property type="nucleotide sequence ID" value="NM_001004744.1"/>
</dbReference>
<dbReference type="SMR" id="Q8NH85"/>
<dbReference type="FunCoup" id="Q8NH85">
    <property type="interactions" value="417"/>
</dbReference>
<dbReference type="STRING" id="9606.ENSP00000485324"/>
<dbReference type="GlyCosmos" id="Q8NH85">
    <property type="glycosylation" value="1 site, No reported glycans"/>
</dbReference>
<dbReference type="GlyGen" id="Q8NH85">
    <property type="glycosylation" value="1 site"/>
</dbReference>
<dbReference type="iPTMnet" id="Q8NH85"/>
<dbReference type="PhosphoSitePlus" id="Q8NH85"/>
<dbReference type="BioMuta" id="OR5R1"/>
<dbReference type="DMDM" id="60392877"/>
<dbReference type="jPOST" id="Q8NH85"/>
<dbReference type="MassIVE" id="Q8NH85"/>
<dbReference type="PaxDb" id="9606-ENSP00000308595"/>
<dbReference type="PeptideAtlas" id="Q8NH85"/>
<dbReference type="Antibodypedia" id="78740">
    <property type="antibodies" value="34 antibodies from 17 providers"/>
</dbReference>
<dbReference type="DNASU" id="219479"/>
<dbReference type="Ensembl" id="ENST00000623286.1">
    <property type="protein sequence ID" value="ENSP00000485324.1"/>
    <property type="gene ID" value="ENSG00000279961.2"/>
</dbReference>
<dbReference type="Ensembl" id="ENST00000708999.1">
    <property type="protein sequence ID" value="ENSP00000517451.1"/>
    <property type="gene ID" value="ENSG00000291849.1"/>
</dbReference>
<dbReference type="GeneID" id="219479"/>
<dbReference type="KEGG" id="hsa:219479"/>
<dbReference type="MANE-Select" id="ENST00000623286.1">
    <property type="protein sequence ID" value="ENSP00000485324.1"/>
    <property type="RefSeq nucleotide sequence ID" value="NM_001004744.1"/>
    <property type="RefSeq protein sequence ID" value="NP_001004744.1"/>
</dbReference>
<dbReference type="UCSC" id="uc010rji.2">
    <property type="organism name" value="human"/>
</dbReference>
<dbReference type="AGR" id="HGNC:14841"/>
<dbReference type="CTD" id="219479"/>
<dbReference type="DisGeNET" id="219479"/>
<dbReference type="GeneCards" id="OR8U3"/>
<dbReference type="HGNC" id="HGNC:14841">
    <property type="gene designation" value="OR8U3"/>
</dbReference>
<dbReference type="HPA" id="ENSG00000279961">
    <property type="expression patterns" value="Not detected"/>
</dbReference>
<dbReference type="neXtProt" id="NX_Q8NH85"/>
<dbReference type="OpenTargets" id="ENSG00000279961"/>
<dbReference type="VEuPathDB" id="HostDB:ENSG00000279961"/>
<dbReference type="eggNOG" id="ENOG502RF3K">
    <property type="taxonomic scope" value="Eukaryota"/>
</dbReference>
<dbReference type="GeneTree" id="ENSGT00950000182718"/>
<dbReference type="HOGENOM" id="CLU_012526_1_0_1"/>
<dbReference type="InParanoid" id="Q8NH85"/>
<dbReference type="OMA" id="FHLTYCG"/>
<dbReference type="OrthoDB" id="9518048at2759"/>
<dbReference type="PAN-GO" id="Q8NH85">
    <property type="GO annotations" value="4 GO annotations based on evolutionary models"/>
</dbReference>
<dbReference type="PhylomeDB" id="Q8NH85"/>
<dbReference type="TreeFam" id="TF352753"/>
<dbReference type="PathwayCommons" id="Q8NH85"/>
<dbReference type="Reactome" id="R-HSA-9752946">
    <property type="pathway name" value="Expression and translocation of olfactory receptors"/>
</dbReference>
<dbReference type="SignaLink" id="Q8NH85"/>
<dbReference type="BioGRID-ORCS" id="219479">
    <property type="hits" value="9 hits in 740 CRISPR screens"/>
</dbReference>
<dbReference type="GeneWiki" id="OR5R1"/>
<dbReference type="GenomeRNAi" id="219479"/>
<dbReference type="Pharos" id="Q8NH85">
    <property type="development level" value="Tdark"/>
</dbReference>
<dbReference type="PRO" id="PR:Q8NH85"/>
<dbReference type="Proteomes" id="UP000005640">
    <property type="component" value="Chromosome 11"/>
</dbReference>
<dbReference type="RNAct" id="Q8NH85">
    <property type="molecule type" value="protein"/>
</dbReference>
<dbReference type="GO" id="GO:0005886">
    <property type="term" value="C:plasma membrane"/>
    <property type="evidence" value="ECO:0007669"/>
    <property type="project" value="UniProtKB-SubCell"/>
</dbReference>
<dbReference type="GO" id="GO:0004930">
    <property type="term" value="F:G protein-coupled receptor activity"/>
    <property type="evidence" value="ECO:0007669"/>
    <property type="project" value="UniProtKB-KW"/>
</dbReference>
<dbReference type="GO" id="GO:0004984">
    <property type="term" value="F:olfactory receptor activity"/>
    <property type="evidence" value="ECO:0007669"/>
    <property type="project" value="InterPro"/>
</dbReference>
<dbReference type="CDD" id="cd15413">
    <property type="entry name" value="7tmA_OR8K-like"/>
    <property type="match status" value="1"/>
</dbReference>
<dbReference type="FunFam" id="1.20.1070.10:FF:000003">
    <property type="entry name" value="Olfactory receptor"/>
    <property type="match status" value="1"/>
</dbReference>
<dbReference type="Gene3D" id="1.20.1070.10">
    <property type="entry name" value="Rhodopsin 7-helix transmembrane proteins"/>
    <property type="match status" value="1"/>
</dbReference>
<dbReference type="InterPro" id="IPR000276">
    <property type="entry name" value="GPCR_Rhodpsn"/>
</dbReference>
<dbReference type="InterPro" id="IPR017452">
    <property type="entry name" value="GPCR_Rhodpsn_7TM"/>
</dbReference>
<dbReference type="InterPro" id="IPR000725">
    <property type="entry name" value="Olfact_rcpt"/>
</dbReference>
<dbReference type="PANTHER" id="PTHR48018">
    <property type="entry name" value="OLFACTORY RECEPTOR"/>
    <property type="match status" value="1"/>
</dbReference>
<dbReference type="Pfam" id="PF13853">
    <property type="entry name" value="7tm_4"/>
    <property type="match status" value="1"/>
</dbReference>
<dbReference type="PRINTS" id="PR00237">
    <property type="entry name" value="GPCRRHODOPSN"/>
</dbReference>
<dbReference type="PRINTS" id="PR00245">
    <property type="entry name" value="OLFACTORYR"/>
</dbReference>
<dbReference type="SUPFAM" id="SSF81321">
    <property type="entry name" value="Family A G protein-coupled receptor-like"/>
    <property type="match status" value="1"/>
</dbReference>
<dbReference type="PROSITE" id="PS50262">
    <property type="entry name" value="G_PROTEIN_RECEP_F1_2"/>
    <property type="match status" value="1"/>
</dbReference>
<proteinExistence type="inferred from homology"/>
<name>OR5R1_HUMAN</name>
<sequence length="324" mass="36708">MAEVNIIYVTVFILKGITNRPELQAPCFGVFLVIYLVTVLGNLGLITLIKIDTRLHTPMYYFLSHLAFVDLCYSSAITPKMMVNFVVERNTIPFHACATQLGCFLTFMITECFLLASMAYDCYVAICSPLHYSTLMSRRVCIQLVAVPYIYSFLVALFHTVITFRLTYCGPNLINHFYCDDLPFLALSCSDTHMKEILIFAFAGFDMISSSSIVLTSYIFIIAAILRIRSTQGQHKAISTCGSHMVTVTIFYGTLIFMYLQPKSNHSLDTDKMASVFYTVVIPMLNPLIYSLRNKEVKDASKKALDKGCENLQILTFLKIRKLY</sequence>
<evidence type="ECO:0000255" key="1"/>
<evidence type="ECO:0000255" key="2">
    <source>
        <dbReference type="PROSITE-ProRule" id="PRU00521"/>
    </source>
</evidence>
<evidence type="ECO:0000305" key="3"/>
<evidence type="ECO:0000312" key="4">
    <source>
        <dbReference type="HGNC" id="HGNC:14841"/>
    </source>
</evidence>
<keyword id="KW-1003">Cell membrane</keyword>
<keyword id="KW-1015">Disulfide bond</keyword>
<keyword id="KW-0297">G-protein coupled receptor</keyword>
<keyword id="KW-0325">Glycoprotein</keyword>
<keyword id="KW-0472">Membrane</keyword>
<keyword id="KW-0552">Olfaction</keyword>
<keyword id="KW-0675">Receptor</keyword>
<keyword id="KW-1185">Reference proteome</keyword>
<keyword id="KW-0716">Sensory transduction</keyword>
<keyword id="KW-0807">Transducer</keyword>
<keyword id="KW-0812">Transmembrane</keyword>
<keyword id="KW-1133">Transmembrane helix</keyword>
<organism>
    <name type="scientific">Homo sapiens</name>
    <name type="common">Human</name>
    <dbReference type="NCBI Taxonomy" id="9606"/>
    <lineage>
        <taxon>Eukaryota</taxon>
        <taxon>Metazoa</taxon>
        <taxon>Chordata</taxon>
        <taxon>Craniata</taxon>
        <taxon>Vertebrata</taxon>
        <taxon>Euteleostomi</taxon>
        <taxon>Mammalia</taxon>
        <taxon>Eutheria</taxon>
        <taxon>Euarchontoglires</taxon>
        <taxon>Primates</taxon>
        <taxon>Haplorrhini</taxon>
        <taxon>Catarrhini</taxon>
        <taxon>Hominidae</taxon>
        <taxon>Homo</taxon>
    </lineage>
</organism>
<feature type="chain" id="PRO_0000150612" description="Olfactory receptor 8U3">
    <location>
        <begin position="1"/>
        <end position="324"/>
    </location>
</feature>
<feature type="topological domain" description="Extracellular" evidence="1">
    <location>
        <begin position="1"/>
        <end position="25"/>
    </location>
</feature>
<feature type="transmembrane region" description="Helical; Name=1" evidence="1">
    <location>
        <begin position="26"/>
        <end position="46"/>
    </location>
</feature>
<feature type="topological domain" description="Cytoplasmic" evidence="1">
    <location>
        <begin position="47"/>
        <end position="54"/>
    </location>
</feature>
<feature type="transmembrane region" description="Helical; Name=2" evidence="1">
    <location>
        <begin position="55"/>
        <end position="75"/>
    </location>
</feature>
<feature type="topological domain" description="Extracellular" evidence="1">
    <location>
        <begin position="76"/>
        <end position="99"/>
    </location>
</feature>
<feature type="transmembrane region" description="Helical; Name=3" evidence="1">
    <location>
        <begin position="100"/>
        <end position="120"/>
    </location>
</feature>
<feature type="topological domain" description="Cytoplasmic" evidence="1">
    <location>
        <begin position="121"/>
        <end position="139"/>
    </location>
</feature>
<feature type="transmembrane region" description="Helical; Name=4" evidence="1">
    <location>
        <begin position="140"/>
        <end position="160"/>
    </location>
</feature>
<feature type="topological domain" description="Extracellular" evidence="1">
    <location>
        <begin position="161"/>
        <end position="196"/>
    </location>
</feature>
<feature type="transmembrane region" description="Helical; Name=5" evidence="1">
    <location>
        <begin position="197"/>
        <end position="217"/>
    </location>
</feature>
<feature type="topological domain" description="Cytoplasmic" evidence="1">
    <location>
        <begin position="218"/>
        <end position="237"/>
    </location>
</feature>
<feature type="transmembrane region" description="Helical; Name=6" evidence="1">
    <location>
        <begin position="238"/>
        <end position="258"/>
    </location>
</feature>
<feature type="topological domain" description="Extracellular" evidence="1">
    <location>
        <begin position="259"/>
        <end position="271"/>
    </location>
</feature>
<feature type="transmembrane region" description="Helical; Name=7" evidence="1">
    <location>
        <begin position="272"/>
        <end position="292"/>
    </location>
</feature>
<feature type="topological domain" description="Cytoplasmic" evidence="1">
    <location>
        <begin position="293"/>
        <end position="324"/>
    </location>
</feature>
<feature type="glycosylation site" description="N-linked (GlcNAc...) asparagine" evidence="1">
    <location>
        <position position="265"/>
    </location>
</feature>
<feature type="disulfide bond" evidence="2">
    <location>
        <begin position="97"/>
        <end position="189"/>
    </location>
</feature>
<feature type="sequence variant" id="VAR_024102" description="In dbSNP:rs7931261.">
    <original>I</original>
    <variation>T</variation>
    <location>
        <position position="7"/>
    </location>
</feature>
<feature type="sequence variant" id="VAR_053205" description="In dbSNP:rs7123108.">
    <original>C</original>
    <variation>Y</variation>
    <location>
        <position position="103"/>
    </location>
</feature>
<feature type="sequence variant" id="VAR_053206" description="In dbSNP:rs7111634.">
    <original>D</original>
    <variation>G</variation>
    <location>
        <position position="121"/>
    </location>
</feature>
<feature type="sequence variant" id="VAR_024103" description="In dbSNP:rs6591324.">
    <original>C</original>
    <variation>R</variation>
    <location>
        <position position="122"/>
    </location>
</feature>
<feature type="sequence variant" id="VAR_053207" description="In dbSNP:rs7933772.">
    <original>S</original>
    <variation>G</variation>
    <location>
        <position position="128"/>
    </location>
</feature>
<feature type="sequence variant" id="VAR_053208" description="In dbSNP:rs17150578.">
    <original>Y</original>
    <variation>H</variation>
    <location>
        <position position="132"/>
    </location>
</feature>
<feature type="sequence variant" id="VAR_053209" description="In dbSNP:rs12785840.">
    <original>I</original>
    <variation>T</variation>
    <location>
        <position position="162"/>
    </location>
</feature>
<feature type="sequence variant" id="VAR_024104" description="In dbSNP:rs7930678.">
    <original>F</original>
    <variation>L</variation>
    <location>
        <position position="184"/>
    </location>
</feature>
<feature type="sequence variant" id="VAR_024105" description="In dbSNP:rs998544.">
    <original>A</original>
    <variation>V</variation>
    <location>
        <position position="274"/>
    </location>
</feature>